<keyword id="KW-0067">ATP-binding</keyword>
<keyword id="KW-0436">Ligase</keyword>
<keyword id="KW-0460">Magnesium</keyword>
<keyword id="KW-0479">Metal-binding</keyword>
<keyword id="KW-0547">Nucleotide-binding</keyword>
<keyword id="KW-0816">Tricarboxylic acid cycle</keyword>
<proteinExistence type="inferred from homology"/>
<comment type="function">
    <text evidence="1">Succinyl-CoA synthetase functions in the citric acid cycle (TCA), coupling the hydrolysis of succinyl-CoA to the synthesis of either ATP or GTP and thus represents the only step of substrate-level phosphorylation in the TCA. The beta subunit provides nucleotide specificity of the enzyme and binds the substrate succinate, while the binding sites for coenzyme A and phosphate are found in the alpha subunit.</text>
</comment>
<comment type="catalytic activity">
    <reaction evidence="1">
        <text>succinate + ATP + CoA = succinyl-CoA + ADP + phosphate</text>
        <dbReference type="Rhea" id="RHEA:17661"/>
        <dbReference type="ChEBI" id="CHEBI:30031"/>
        <dbReference type="ChEBI" id="CHEBI:30616"/>
        <dbReference type="ChEBI" id="CHEBI:43474"/>
        <dbReference type="ChEBI" id="CHEBI:57287"/>
        <dbReference type="ChEBI" id="CHEBI:57292"/>
        <dbReference type="ChEBI" id="CHEBI:456216"/>
        <dbReference type="EC" id="6.2.1.5"/>
    </reaction>
    <physiologicalReaction direction="right-to-left" evidence="1">
        <dbReference type="Rhea" id="RHEA:17663"/>
    </physiologicalReaction>
</comment>
<comment type="catalytic activity">
    <reaction evidence="1">
        <text>GTP + succinate + CoA = succinyl-CoA + GDP + phosphate</text>
        <dbReference type="Rhea" id="RHEA:22120"/>
        <dbReference type="ChEBI" id="CHEBI:30031"/>
        <dbReference type="ChEBI" id="CHEBI:37565"/>
        <dbReference type="ChEBI" id="CHEBI:43474"/>
        <dbReference type="ChEBI" id="CHEBI:57287"/>
        <dbReference type="ChEBI" id="CHEBI:57292"/>
        <dbReference type="ChEBI" id="CHEBI:58189"/>
    </reaction>
    <physiologicalReaction direction="right-to-left" evidence="1">
        <dbReference type="Rhea" id="RHEA:22122"/>
    </physiologicalReaction>
</comment>
<comment type="cofactor">
    <cofactor evidence="1">
        <name>Mg(2+)</name>
        <dbReference type="ChEBI" id="CHEBI:18420"/>
    </cofactor>
    <text evidence="1">Binds 1 Mg(2+) ion per subunit.</text>
</comment>
<comment type="pathway">
    <text evidence="1">Carbohydrate metabolism; tricarboxylic acid cycle; succinate from succinyl-CoA (ligase route): step 1/1.</text>
</comment>
<comment type="subunit">
    <text evidence="1">Heterotetramer of two alpha and two beta subunits.</text>
</comment>
<comment type="similarity">
    <text evidence="1">Belongs to the succinate/malate CoA ligase beta subunit family.</text>
</comment>
<protein>
    <recommendedName>
        <fullName evidence="1">Succinate--CoA ligase [ADP-forming] subunit beta</fullName>
        <ecNumber evidence="1">6.2.1.5</ecNumber>
    </recommendedName>
    <alternativeName>
        <fullName evidence="1">Succinyl-CoA synthetase subunit beta</fullName>
        <shortName evidence="1">SCS-beta</shortName>
    </alternativeName>
</protein>
<sequence>MNLHEYQAKQLFAEYGLPVSTGYAVDTPEAAVEAAKKIGGNKWVVKAQVHAGGRGKAGGVKLVDSYEEVAAFTQNWLGKNLVTYQTDANGQPVAKILVESCTDIANELYLGAVVDRSTRRVVFMASTEGGVEIEKVAEETPELIHKAIIDPLVGAQPYQARELAFKLGLNPTQIKQFTKVFLGLSQMFHDYDFALLEINPLVITDEGNLHCLDGKIGIDSNAVYRQKKMQEFHDPSQEDEREAHAAKWELNYVALDGNVGCMVNGAGLAMGTMDIVNLHGGKPANFLDVGGGATKERVAEAFKIILSDSNVKAVLVNIFGGIVRCDMIAEGIIGAVEQVGVNVPVVVRLEGTNAEKGREVLANSGLDIIAATSLKDAAEQVVKAAEGK</sequence>
<accession>A6VZ30</accession>
<name>SUCC_MARMS</name>
<reference key="1">
    <citation type="submission" date="2007-06" db="EMBL/GenBank/DDBJ databases">
        <title>Complete sequence of Marinomonas sp. MWYL1.</title>
        <authorList>
            <consortium name="US DOE Joint Genome Institute"/>
            <person name="Copeland A."/>
            <person name="Lucas S."/>
            <person name="Lapidus A."/>
            <person name="Barry K."/>
            <person name="Glavina del Rio T."/>
            <person name="Dalin E."/>
            <person name="Tice H."/>
            <person name="Pitluck S."/>
            <person name="Kiss H."/>
            <person name="Brettin T."/>
            <person name="Bruce D."/>
            <person name="Detter J.C."/>
            <person name="Han C."/>
            <person name="Schmutz J."/>
            <person name="Larimer F."/>
            <person name="Land M."/>
            <person name="Hauser L."/>
            <person name="Kyrpides N."/>
            <person name="Kim E."/>
            <person name="Johnston A.W.B."/>
            <person name="Todd J.D."/>
            <person name="Rogers R."/>
            <person name="Wexler M."/>
            <person name="Bond P.L."/>
            <person name="Li Y."/>
            <person name="Richardson P."/>
        </authorList>
    </citation>
    <scope>NUCLEOTIDE SEQUENCE [LARGE SCALE GENOMIC DNA]</scope>
    <source>
        <strain>MWYL1</strain>
    </source>
</reference>
<dbReference type="EC" id="6.2.1.5" evidence="1"/>
<dbReference type="EMBL" id="CP000749">
    <property type="protein sequence ID" value="ABR71709.1"/>
    <property type="molecule type" value="Genomic_DNA"/>
</dbReference>
<dbReference type="SMR" id="A6VZ30"/>
<dbReference type="STRING" id="400668.Mmwyl1_2797"/>
<dbReference type="KEGG" id="mmw:Mmwyl1_2797"/>
<dbReference type="eggNOG" id="COG0045">
    <property type="taxonomic scope" value="Bacteria"/>
</dbReference>
<dbReference type="HOGENOM" id="CLU_037430_0_2_6"/>
<dbReference type="OrthoDB" id="9802602at2"/>
<dbReference type="UniPathway" id="UPA00223">
    <property type="reaction ID" value="UER00999"/>
</dbReference>
<dbReference type="GO" id="GO:0005829">
    <property type="term" value="C:cytosol"/>
    <property type="evidence" value="ECO:0007669"/>
    <property type="project" value="TreeGrafter"/>
</dbReference>
<dbReference type="GO" id="GO:0042709">
    <property type="term" value="C:succinate-CoA ligase complex"/>
    <property type="evidence" value="ECO:0007669"/>
    <property type="project" value="TreeGrafter"/>
</dbReference>
<dbReference type="GO" id="GO:0005524">
    <property type="term" value="F:ATP binding"/>
    <property type="evidence" value="ECO:0007669"/>
    <property type="project" value="UniProtKB-UniRule"/>
</dbReference>
<dbReference type="GO" id="GO:0000287">
    <property type="term" value="F:magnesium ion binding"/>
    <property type="evidence" value="ECO:0007669"/>
    <property type="project" value="UniProtKB-UniRule"/>
</dbReference>
<dbReference type="GO" id="GO:0004775">
    <property type="term" value="F:succinate-CoA ligase (ADP-forming) activity"/>
    <property type="evidence" value="ECO:0007669"/>
    <property type="project" value="UniProtKB-UniRule"/>
</dbReference>
<dbReference type="GO" id="GO:0004776">
    <property type="term" value="F:succinate-CoA ligase (GDP-forming) activity"/>
    <property type="evidence" value="ECO:0007669"/>
    <property type="project" value="RHEA"/>
</dbReference>
<dbReference type="GO" id="GO:0006104">
    <property type="term" value="P:succinyl-CoA metabolic process"/>
    <property type="evidence" value="ECO:0007669"/>
    <property type="project" value="TreeGrafter"/>
</dbReference>
<dbReference type="GO" id="GO:0006099">
    <property type="term" value="P:tricarboxylic acid cycle"/>
    <property type="evidence" value="ECO:0007669"/>
    <property type="project" value="UniProtKB-UniRule"/>
</dbReference>
<dbReference type="FunFam" id="3.30.1490.20:FF:000002">
    <property type="entry name" value="Succinate--CoA ligase [ADP-forming] subunit beta"/>
    <property type="match status" value="1"/>
</dbReference>
<dbReference type="FunFam" id="3.30.470.20:FF:000002">
    <property type="entry name" value="Succinate--CoA ligase [ADP-forming] subunit beta"/>
    <property type="match status" value="1"/>
</dbReference>
<dbReference type="FunFam" id="3.40.50.261:FF:000001">
    <property type="entry name" value="Succinate--CoA ligase [ADP-forming] subunit beta"/>
    <property type="match status" value="1"/>
</dbReference>
<dbReference type="Gene3D" id="3.30.1490.20">
    <property type="entry name" value="ATP-grasp fold, A domain"/>
    <property type="match status" value="1"/>
</dbReference>
<dbReference type="Gene3D" id="3.30.470.20">
    <property type="entry name" value="ATP-grasp fold, B domain"/>
    <property type="match status" value="1"/>
</dbReference>
<dbReference type="Gene3D" id="3.40.50.261">
    <property type="entry name" value="Succinyl-CoA synthetase domains"/>
    <property type="match status" value="1"/>
</dbReference>
<dbReference type="HAMAP" id="MF_00558">
    <property type="entry name" value="Succ_CoA_beta"/>
    <property type="match status" value="1"/>
</dbReference>
<dbReference type="InterPro" id="IPR011761">
    <property type="entry name" value="ATP-grasp"/>
</dbReference>
<dbReference type="InterPro" id="IPR013650">
    <property type="entry name" value="ATP-grasp_succ-CoA_synth-type"/>
</dbReference>
<dbReference type="InterPro" id="IPR013815">
    <property type="entry name" value="ATP_grasp_subdomain_1"/>
</dbReference>
<dbReference type="InterPro" id="IPR017866">
    <property type="entry name" value="Succ-CoA_synthase_bsu_CS"/>
</dbReference>
<dbReference type="InterPro" id="IPR005811">
    <property type="entry name" value="SUCC_ACL_C"/>
</dbReference>
<dbReference type="InterPro" id="IPR005809">
    <property type="entry name" value="Succ_CoA_ligase-like_bsu"/>
</dbReference>
<dbReference type="InterPro" id="IPR016102">
    <property type="entry name" value="Succinyl-CoA_synth-like"/>
</dbReference>
<dbReference type="NCBIfam" id="NF001913">
    <property type="entry name" value="PRK00696.1"/>
    <property type="match status" value="1"/>
</dbReference>
<dbReference type="NCBIfam" id="TIGR01016">
    <property type="entry name" value="sucCoAbeta"/>
    <property type="match status" value="1"/>
</dbReference>
<dbReference type="PANTHER" id="PTHR11815:SF10">
    <property type="entry name" value="SUCCINATE--COA LIGASE [GDP-FORMING] SUBUNIT BETA, MITOCHONDRIAL"/>
    <property type="match status" value="1"/>
</dbReference>
<dbReference type="PANTHER" id="PTHR11815">
    <property type="entry name" value="SUCCINYL-COA SYNTHETASE BETA CHAIN"/>
    <property type="match status" value="1"/>
</dbReference>
<dbReference type="Pfam" id="PF08442">
    <property type="entry name" value="ATP-grasp_2"/>
    <property type="match status" value="1"/>
</dbReference>
<dbReference type="Pfam" id="PF00549">
    <property type="entry name" value="Ligase_CoA"/>
    <property type="match status" value="1"/>
</dbReference>
<dbReference type="PIRSF" id="PIRSF001554">
    <property type="entry name" value="SucCS_beta"/>
    <property type="match status" value="1"/>
</dbReference>
<dbReference type="SUPFAM" id="SSF56059">
    <property type="entry name" value="Glutathione synthetase ATP-binding domain-like"/>
    <property type="match status" value="1"/>
</dbReference>
<dbReference type="SUPFAM" id="SSF52210">
    <property type="entry name" value="Succinyl-CoA synthetase domains"/>
    <property type="match status" value="1"/>
</dbReference>
<dbReference type="PROSITE" id="PS50975">
    <property type="entry name" value="ATP_GRASP"/>
    <property type="match status" value="1"/>
</dbReference>
<dbReference type="PROSITE" id="PS01217">
    <property type="entry name" value="SUCCINYL_COA_LIG_3"/>
    <property type="match status" value="1"/>
</dbReference>
<organism>
    <name type="scientific">Marinomonas sp. (strain MWYL1)</name>
    <dbReference type="NCBI Taxonomy" id="400668"/>
    <lineage>
        <taxon>Bacteria</taxon>
        <taxon>Pseudomonadati</taxon>
        <taxon>Pseudomonadota</taxon>
        <taxon>Gammaproteobacteria</taxon>
        <taxon>Oceanospirillales</taxon>
        <taxon>Oceanospirillaceae</taxon>
        <taxon>Marinomonas</taxon>
    </lineage>
</organism>
<gene>
    <name evidence="1" type="primary">sucC</name>
    <name type="ordered locus">Mmwyl1_2797</name>
</gene>
<evidence type="ECO:0000255" key="1">
    <source>
        <dbReference type="HAMAP-Rule" id="MF_00558"/>
    </source>
</evidence>
<feature type="chain" id="PRO_1000082122" description="Succinate--CoA ligase [ADP-forming] subunit beta">
    <location>
        <begin position="1"/>
        <end position="388"/>
    </location>
</feature>
<feature type="domain" description="ATP-grasp" evidence="1">
    <location>
        <begin position="9"/>
        <end position="244"/>
    </location>
</feature>
<feature type="binding site" evidence="1">
    <location>
        <position position="46"/>
    </location>
    <ligand>
        <name>ATP</name>
        <dbReference type="ChEBI" id="CHEBI:30616"/>
    </ligand>
</feature>
<feature type="binding site" evidence="1">
    <location>
        <begin position="53"/>
        <end position="55"/>
    </location>
    <ligand>
        <name>ATP</name>
        <dbReference type="ChEBI" id="CHEBI:30616"/>
    </ligand>
</feature>
<feature type="binding site" evidence="1">
    <location>
        <position position="99"/>
    </location>
    <ligand>
        <name>ATP</name>
        <dbReference type="ChEBI" id="CHEBI:30616"/>
    </ligand>
</feature>
<feature type="binding site" evidence="1">
    <location>
        <position position="102"/>
    </location>
    <ligand>
        <name>ATP</name>
        <dbReference type="ChEBI" id="CHEBI:30616"/>
    </ligand>
</feature>
<feature type="binding site" evidence="1">
    <location>
        <position position="107"/>
    </location>
    <ligand>
        <name>ATP</name>
        <dbReference type="ChEBI" id="CHEBI:30616"/>
    </ligand>
</feature>
<feature type="binding site" evidence="1">
    <location>
        <position position="199"/>
    </location>
    <ligand>
        <name>Mg(2+)</name>
        <dbReference type="ChEBI" id="CHEBI:18420"/>
    </ligand>
</feature>
<feature type="binding site" evidence="1">
    <location>
        <position position="213"/>
    </location>
    <ligand>
        <name>Mg(2+)</name>
        <dbReference type="ChEBI" id="CHEBI:18420"/>
    </ligand>
</feature>
<feature type="binding site" evidence="1">
    <location>
        <position position="264"/>
    </location>
    <ligand>
        <name>substrate</name>
        <note>ligand shared with subunit alpha</note>
    </ligand>
</feature>
<feature type="binding site" evidence="1">
    <location>
        <begin position="321"/>
        <end position="323"/>
    </location>
    <ligand>
        <name>substrate</name>
        <note>ligand shared with subunit alpha</note>
    </ligand>
</feature>